<organism>
    <name type="scientific">Homo sapiens</name>
    <name type="common">Human</name>
    <dbReference type="NCBI Taxonomy" id="9606"/>
    <lineage>
        <taxon>Eukaryota</taxon>
        <taxon>Metazoa</taxon>
        <taxon>Chordata</taxon>
        <taxon>Craniata</taxon>
        <taxon>Vertebrata</taxon>
        <taxon>Euteleostomi</taxon>
        <taxon>Mammalia</taxon>
        <taxon>Eutheria</taxon>
        <taxon>Euarchontoglires</taxon>
        <taxon>Primates</taxon>
        <taxon>Haplorrhini</taxon>
        <taxon>Catarrhini</taxon>
        <taxon>Hominidae</taxon>
        <taxon>Homo</taxon>
    </lineage>
</organism>
<name>TJA3_HUMAN</name>
<reference key="1">
    <citation type="journal article" date="2003" name="Nature">
        <title>The DNA sequence and analysis of human chromosome 14.</title>
        <authorList>
            <person name="Heilig R."/>
            <person name="Eckenberg R."/>
            <person name="Petit J.-L."/>
            <person name="Fonknechten N."/>
            <person name="Da Silva C."/>
            <person name="Cattolico L."/>
            <person name="Levy M."/>
            <person name="Barbe V."/>
            <person name="De Berardinis V."/>
            <person name="Ureta-Vidal A."/>
            <person name="Pelletier E."/>
            <person name="Vico V."/>
            <person name="Anthouard V."/>
            <person name="Rowen L."/>
            <person name="Madan A."/>
            <person name="Qin S."/>
            <person name="Sun H."/>
            <person name="Du H."/>
            <person name="Pepin K."/>
            <person name="Artiguenave F."/>
            <person name="Robert C."/>
            <person name="Cruaud C."/>
            <person name="Bruels T."/>
            <person name="Jaillon O."/>
            <person name="Friedlander L."/>
            <person name="Samson G."/>
            <person name="Brottier P."/>
            <person name="Cure S."/>
            <person name="Segurens B."/>
            <person name="Aniere F."/>
            <person name="Samain S."/>
            <person name="Crespeau H."/>
            <person name="Abbasi N."/>
            <person name="Aiach N."/>
            <person name="Boscus D."/>
            <person name="Dickhoff R."/>
            <person name="Dors M."/>
            <person name="Dubois I."/>
            <person name="Friedman C."/>
            <person name="Gouyvenoux M."/>
            <person name="James R."/>
            <person name="Madan A."/>
            <person name="Mairey-Estrada B."/>
            <person name="Mangenot S."/>
            <person name="Martins N."/>
            <person name="Menard M."/>
            <person name="Oztas S."/>
            <person name="Ratcliffe A."/>
            <person name="Shaffer T."/>
            <person name="Trask B."/>
            <person name="Vacherie B."/>
            <person name="Bellemere C."/>
            <person name="Belser C."/>
            <person name="Besnard-Gonnet M."/>
            <person name="Bartol-Mavel D."/>
            <person name="Boutard M."/>
            <person name="Briez-Silla S."/>
            <person name="Combette S."/>
            <person name="Dufosse-Laurent V."/>
            <person name="Ferron C."/>
            <person name="Lechaplais C."/>
            <person name="Louesse C."/>
            <person name="Muselet D."/>
            <person name="Magdelenat G."/>
            <person name="Pateau E."/>
            <person name="Petit E."/>
            <person name="Sirvain-Trukniewicz P."/>
            <person name="Trybou A."/>
            <person name="Vega-Czarny N."/>
            <person name="Bataille E."/>
            <person name="Bluet E."/>
            <person name="Bordelais I."/>
            <person name="Dubois M."/>
            <person name="Dumont C."/>
            <person name="Guerin T."/>
            <person name="Haffray S."/>
            <person name="Hammadi R."/>
            <person name="Muanga J."/>
            <person name="Pellouin V."/>
            <person name="Robert D."/>
            <person name="Wunderle E."/>
            <person name="Gauguet G."/>
            <person name="Roy A."/>
            <person name="Sainte-Marthe L."/>
            <person name="Verdier J."/>
            <person name="Verdier-Discala C."/>
            <person name="Hillier L.W."/>
            <person name="Fulton L."/>
            <person name="McPherson J."/>
            <person name="Matsuda F."/>
            <person name="Wilson R."/>
            <person name="Scarpelli C."/>
            <person name="Gyapay G."/>
            <person name="Wincker P."/>
            <person name="Saurin W."/>
            <person name="Quetier F."/>
            <person name="Waterston R."/>
            <person name="Hood L."/>
            <person name="Weissenbach J."/>
        </authorList>
    </citation>
    <scope>NUCLEOTIDE SEQUENCE [LARGE SCALE GENOMIC DNA] (IMGT ALLELE TRAJ3*01)</scope>
</reference>
<reference key="2">
    <citation type="book" date="2001" name="The T Cell Receptor FactsBook.">
        <title>The T Cell Receptor FactsBook.</title>
        <editorList>
            <person name="Lefranc M.P."/>
            <person name="Lefranc G."/>
        </editorList>
        <authorList>
            <person name="Lefranc M.P."/>
            <person name="Lefranc G."/>
        </authorList>
    </citation>
    <scope>NOMENCLATURE</scope>
</reference>
<reference key="3">
    <citation type="journal article" date="2004" name="Nat. Rev. Immunol.">
        <title>The many important facets of T-cell repertoire diversity.</title>
        <authorList>
            <person name="Nikolich-Zugich J."/>
            <person name="Slifka M.K."/>
            <person name="Messaoudi I."/>
        </authorList>
    </citation>
    <scope>REVIEW ON T CELL REPERTOIRE DIVERSITY</scope>
</reference>
<reference key="4">
    <citation type="journal article" date="2010" name="Cold Spring Harb. Perspect. Biol.">
        <title>Structural biology of the T-cell receptor: insights into receptor assembly, ligand recognition, and initiation of signaling.</title>
        <authorList>
            <person name="Wucherpfennig K.W."/>
            <person name="Gagnon E."/>
            <person name="Call M.J."/>
            <person name="Huseby E.S."/>
            <person name="Call M.E."/>
        </authorList>
    </citation>
    <scope>REVIEW ON T CELL RECEPTOR-CD3 COMPLEX ASSEMBLY</scope>
    <scope>SUBCELLULAR LOCATION</scope>
</reference>
<reference key="5">
    <citation type="journal article" date="2013" name="Nat. Rev. Immunol.">
        <title>T cell receptor signalling networks: branched, diversified and bounded.</title>
        <authorList>
            <person name="Brownlie R.J."/>
            <person name="Zamoyska R."/>
        </authorList>
    </citation>
    <scope>REVIEW ON T CELL RECEPTOR SIGNALING</scope>
</reference>
<reference key="6">
    <citation type="journal article" date="2014" name="Front. Immunol.">
        <title>Immunoglobulin and T Cell Receptor Genes: IMGT((R)) and the Birth and Rise of Immunoinformatics.</title>
        <authorList>
            <person name="Lefranc M.P."/>
        </authorList>
    </citation>
    <scope>NOMENCLATURE</scope>
</reference>
<reference key="7">
    <citation type="journal article" date="2015" name="Annu. Rev. Immunol.">
        <title>T cell antigen receptor recognition of antigen-presenting molecules.</title>
        <authorList>
            <person name="Rossjohn J."/>
            <person name="Gras S."/>
            <person name="Miles J.J."/>
            <person name="Turner S.J."/>
            <person name="Godfrey D.I."/>
            <person name="McCluskey J."/>
        </authorList>
    </citation>
    <scope>REVIEW ON FUNCTION</scope>
</reference>
<sequence length="20" mass="2097">GYSSASKIIFGSGTRLSIRP</sequence>
<feature type="chain" id="PRO_0000444715" description="T cell receptor alpha joining 3">
    <location>
        <begin position="1" status="less than"/>
        <end position="20" status="greater than"/>
    </location>
</feature>
<feature type="non-terminal residue">
    <location>
        <position position="1"/>
    </location>
</feature>
<feature type="non-terminal residue">
    <location>
        <position position="20"/>
    </location>
</feature>
<protein>
    <recommendedName>
        <fullName evidence="6">T cell receptor alpha joining 3</fullName>
    </recommendedName>
</protein>
<comment type="function">
    <text evidence="1 3 4 5">J region of the variable domain of T cell receptor (TR) alpha chain that participates in the antigen recognition (PubMed:24600447). Alpha-beta T cell receptors are antigen specific receptors which are essential to the immune response and are present on the cell surface of T lymphocytes. Recognize peptide-major histocompatibility (MH) (pMH) complexes that are displayed by antigen presenting cells (APC), a prerequisite for efficient T cell adaptive immunity against pathogens (PubMed:25493333). Binding of alpha-beta TR to pMH complex initiates TR-CD3 clustering on the cell surface and intracellular activation of LCK that phosphorylates the ITAM motifs of CD3G, CD3D, CD3E and CD247 enabling the recruitment of ZAP70. In turn ZAP70 phosphorylates LAT, which recruits numerous signaling molecules to form the LAT signalosome. The LAT signalosome propagates signal branching to three major signaling pathways, the calcium, the mitogen-activated protein kinase (MAPK) kinase and the nuclear factor NF-kappa-B (NF-kB) pathways, leading to the mobilization of transcription factors that are critical for gene expression and essential for T cell growth and differentiation (PubMed:23524462). The T cell repertoire is generated in the thymus, by V-(D)-J rearrangement. This repertoire is then shaped by intrathymic selection events to generate a peripheral T cell pool of self-MH restricted, non-autoaggressive T cells. Post-thymic interaction of alpha-beta TR with the pMH complexes shapes TR structural and functional avidity (PubMed:15040585).</text>
</comment>
<comment type="subunit">
    <text evidence="2">Alpha-beta TR is a heterodimer composed of an alpha and beta chain; disulfide-linked. The alpha-beta TR is associated with the transmembrane signaling CD3 coreceptor proteins to form the TR-CD3 (TcR or TCR). The assembly of alpha-beta TR heterodimers with CD3 occurs in the endoplasmic reticulum where a single alpha-beta TR heterodimer associates with one CD3D-CD3E heterodimer, one CD3G-CD3E heterodimer and one CD247 homodimer forming a stable octameric structure. CD3D-CD3E and CD3G-CD3E heterodimers preferentially associate with TR alpha and TR beta chains, respectively. The association of the CD247 homodimer is the last step of TcR assembly in the endoplasmic reticulum and is required for transport to the cell surface.</text>
</comment>
<comment type="subcellular location">
    <subcellularLocation>
        <location evidence="2">Cell membrane</location>
    </subcellularLocation>
</comment>
<comment type="polymorphism">
    <text evidence="7">There are several alleles. The sequence shown is that of IMGT allele TRAJ3*01.</text>
</comment>
<comment type="caution">
    <text evidence="7">There are several genes encoding the J region in the T cell receptor alpha locus. The peptide described in this entry is a representative for all the peptides encoded by these genes.</text>
</comment>
<proteinExistence type="predicted"/>
<accession>A0A075B6Y3</accession>
<evidence type="ECO:0000303" key="1">
    <source>
    </source>
</evidence>
<evidence type="ECO:0000303" key="2">
    <source>
    </source>
</evidence>
<evidence type="ECO:0000303" key="3">
    <source>
    </source>
</evidence>
<evidence type="ECO:0000303" key="4">
    <source>
    </source>
</evidence>
<evidence type="ECO:0000303" key="5">
    <source>
    </source>
</evidence>
<evidence type="ECO:0000303" key="6">
    <source ref="2"/>
</evidence>
<evidence type="ECO:0000305" key="7"/>
<keyword id="KW-1064">Adaptive immunity</keyword>
<keyword id="KW-1003">Cell membrane</keyword>
<keyword id="KW-0391">Immunity</keyword>
<keyword id="KW-0472">Membrane</keyword>
<keyword id="KW-0675">Receptor</keyword>
<keyword id="KW-1185">Reference proteome</keyword>
<keyword id="KW-1279">T cell receptor</keyword>
<dbReference type="EMBL" id="AC243965">
    <property type="status" value="NOT_ANNOTATED_CDS"/>
    <property type="molecule type" value="Genomic_DNA"/>
</dbReference>
<dbReference type="IMGT_GENE-DB" id="TRAJ3"/>
<dbReference type="BioMuta" id="TRAJ3"/>
<dbReference type="Ensembl" id="ENST00000390534.1">
    <property type="protein sequence ID" value="ENSP00000451699.1"/>
    <property type="gene ID" value="ENSG00000211886.1"/>
</dbReference>
<dbReference type="UCSC" id="uc058zhg.1">
    <property type="organism name" value="human"/>
</dbReference>
<dbReference type="AGR" id="HGNC:12059"/>
<dbReference type="GeneCards" id="TRAJ3"/>
<dbReference type="HGNC" id="HGNC:12059">
    <property type="gene designation" value="TRAJ3"/>
</dbReference>
<dbReference type="HPA" id="ENSG00000211886">
    <property type="expression patterns" value="Tissue enriched (retina)"/>
</dbReference>
<dbReference type="neXtProt" id="NX_A0A075B6Y3"/>
<dbReference type="VEuPathDB" id="HostDB:ENSG00000211886"/>
<dbReference type="HOGENOM" id="CLU_221942_1_1_1"/>
<dbReference type="InParanoid" id="A0A075B6Y3"/>
<dbReference type="PAN-GO" id="A0A075B6Y3">
    <property type="GO annotations" value="0 GO annotations based on evolutionary models"/>
</dbReference>
<dbReference type="ChiTaRS" id="TRAJ3">
    <property type="organism name" value="human"/>
</dbReference>
<dbReference type="Pharos" id="A0A075B6Y3">
    <property type="development level" value="Tdark"/>
</dbReference>
<dbReference type="PRO" id="PR:A0A075B6Y3"/>
<dbReference type="Proteomes" id="UP000005640">
    <property type="component" value="Chromosome 14"/>
</dbReference>
<dbReference type="Bgee" id="ENSG00000211886">
    <property type="expression patterns" value="Expressed in granulocyte and 79 other cell types or tissues"/>
</dbReference>
<dbReference type="GO" id="GO:0042101">
    <property type="term" value="C:T cell receptor complex"/>
    <property type="evidence" value="ECO:0007669"/>
    <property type="project" value="UniProtKB-KW"/>
</dbReference>
<dbReference type="GO" id="GO:0002250">
    <property type="term" value="P:adaptive immune response"/>
    <property type="evidence" value="ECO:0007669"/>
    <property type="project" value="UniProtKB-KW"/>
</dbReference>
<gene>
    <name evidence="6" type="primary">TRAJ3</name>
</gene>